<comment type="function">
    <text evidence="1">Plays a regulatory role in the processing of the amyloid-beta A4 precursor protein (APP) and acts as an inhibitor of the amyloid-beta peptide aggregation and fibrils deposition. Plays a role in the induction of neurite outgrowth. Functions as a protease inhibitor by blocking access of secretases to APP cleavage sites (By similarity).</text>
</comment>
<comment type="function">
    <text evidence="1">Mature BRI2 (mBRI2) functions as a modulator of the amyloid-beta A4 precursor protein (APP) processing leading to a strong reduction in the secretion of secretase-processed amyloid-beta protein 40 and amyloid-beta protein 42.</text>
</comment>
<comment type="function">
    <text evidence="1">Bri23 peptide prevents aggregation of APP amyloid-beta protein 42 into toxic oligomers.</text>
</comment>
<comment type="subunit">
    <text evidence="1 2">Homodimer; disulfide-linked. Interacts with SPPL2A and SPPL2B. Interacts with APP. Mature BRI2 (mBRI2) interacts with the APP amyloid-beta A4 protein; the interaction occurs at the cell surface and in the endocytic compartments and enable alpha- and beta-secretase-induced APP cleavage inhibition. Mature BRI2 (mBRI2) interacts with the APP C99; the interaction occurs in the endocytic compartments and enable gamma-secretase-induced C99 cleavage inhibition. May form heterodimers with Bri23 peptide and APP amyloid-beta protein 40 (By similarity). Interacts with ADAM7 in sperm; the interaction increases following capacitation (By similarity).</text>
</comment>
<comment type="subcellular location">
    <molecule>Integral membrane protein 2B</molecule>
    <subcellularLocation>
        <location evidence="3">Golgi apparatus membrane</location>
        <topology evidence="3">Single-pass type II membrane protein</topology>
    </subcellularLocation>
    <text evidence="3">Immature BRI2 (imBRI2) is cleaved by furin in the Golgi into mBRI2 and a Bri23 peptide. mBRI2 is transported to the plasma membrane and Bri23 peptide is secreted.</text>
</comment>
<comment type="subcellular location">
    <molecule>BRI2, membrane form</molecule>
    <subcellularLocation>
        <location evidence="3">Cell membrane</location>
        <topology evidence="3">Single-pass type II membrane protein</topology>
    </subcellularLocation>
    <subcellularLocation>
        <location evidence="3">Endosome membrane</location>
        <topology evidence="3">Single-pass type II membrane protein</topology>
    </subcellularLocation>
    <text evidence="3">Mature BRI2 (mBRI2) needs to be transported from the endoplasmic reticulum compartment to the cell membrane in order to be able to inhibit APP processing.</text>
</comment>
<comment type="subcellular location">
    <molecule>Bri23 peptide</molecule>
    <subcellularLocation>
        <location evidence="3">Secreted</location>
    </subcellularLocation>
    <text evidence="3">Detected in the cerebral spinal fluid (CSF).</text>
</comment>
<comment type="subcellular location">
    <molecule>BRI2C, soluble form</molecule>
    <subcellularLocation>
        <location evidence="3">Secreted</location>
    </subcellularLocation>
</comment>
<comment type="PTM">
    <text evidence="1">The ectodomain C-terminal part of the imBRI2 is processed by furin producing a secreted Bri23 peptide and a mature BRI2, membrane form (mBRI2). The remaining part of the ectodomain of mBRI2 containing the BRICHOS domain is cleaved by ADAM10 and is secreted (BRI2C, soluble form). The membrane-bound N-terminal fragment (BRI2C, membrane form) is further proteolytically processed by SPPL2A and SPPL2B through regulated intramembrane proteolysis producing a secreted C-peptide and a BRI2 intracellular domain (BRI2 ICD) released in the cytosol. Shedding by ADAM10 facilitates intramembrane cleavage but is not absolutely required for BRI2 ICD generation (By similarity).</text>
</comment>
<comment type="PTM">
    <text evidence="1">Glycosylation at Asn-170 is important for cell surface localization, but doesn't affect furin- and ADAM10-induced proteolytic processing.</text>
</comment>
<comment type="similarity">
    <text evidence="6">Belongs to the ITM2 family.</text>
</comment>
<sequence length="266" mass="30338">MVKVTFNSALAQKEAKKDEPKSGEEALIIPPDAVAVDCKDPDDVVPVGQRRAWCWCMCFGLAFMLAGVILGGAYLYKYFALQPDDVYYCGIKYIKDDVILNEPSADAPAALYQTIEENIKIFEEEEVEFISVPVPEFADSDPANIVHDFNKKLTAYLDLNLDKCYVIPLNTSIVMPPRNLLELLINIKAGTYLPQSYLIHEHMVITDRIENIDHLGFFIYRLCHDKETYKLQRRETIKGIQKREASNCFAIRHFENKFAVETLICS</sequence>
<gene>
    <name type="primary">ITM2B</name>
</gene>
<accession>Q5R876</accession>
<keyword id="KW-1003">Cell membrane</keyword>
<keyword id="KW-1015">Disulfide bond</keyword>
<keyword id="KW-0967">Endosome</keyword>
<keyword id="KW-0325">Glycoprotein</keyword>
<keyword id="KW-0333">Golgi apparatus</keyword>
<keyword id="KW-0472">Membrane</keyword>
<keyword id="KW-1185">Reference proteome</keyword>
<keyword id="KW-0964">Secreted</keyword>
<keyword id="KW-0735">Signal-anchor</keyword>
<keyword id="KW-0812">Transmembrane</keyword>
<keyword id="KW-1133">Transmembrane helix</keyword>
<protein>
    <recommendedName>
        <fullName>Integral membrane protein 2B</fullName>
    </recommendedName>
    <alternativeName>
        <fullName>Immature BRI2</fullName>
        <shortName>imBRI2</shortName>
    </alternativeName>
    <alternativeName>
        <fullName>Transmembrane protein BRI</fullName>
        <shortName>Bri</shortName>
    </alternativeName>
    <component>
        <recommendedName>
            <fullName>BRI2, membrane form</fullName>
        </recommendedName>
        <alternativeName>
            <fullName>Mature BRI2</fullName>
            <shortName>mBRI2</shortName>
        </alternativeName>
    </component>
    <component>
        <recommendedName>
            <fullName>BRI2 intracellular domain</fullName>
            <shortName>BRI2 ICD</shortName>
        </recommendedName>
    </component>
    <component>
        <recommendedName>
            <fullName>BRI2C, soluble form</fullName>
        </recommendedName>
    </component>
    <component>
        <recommendedName>
            <fullName>Bri23 peptide</fullName>
            <shortName>Bri2-23</shortName>
        </recommendedName>
        <alternativeName>
            <fullName>ABri23</fullName>
        </alternativeName>
        <alternativeName>
            <fullName>C-terminal peptide</fullName>
        </alternativeName>
        <alternativeName>
            <fullName>P23 peptide</fullName>
        </alternativeName>
    </component>
</protein>
<evidence type="ECO:0000250" key="1"/>
<evidence type="ECO:0000250" key="2">
    <source>
        <dbReference type="UniProtKB" id="O89051"/>
    </source>
</evidence>
<evidence type="ECO:0000250" key="3">
    <source>
        <dbReference type="UniProtKB" id="Q9Y287"/>
    </source>
</evidence>
<evidence type="ECO:0000255" key="4"/>
<evidence type="ECO:0000255" key="5">
    <source>
        <dbReference type="PROSITE-ProRule" id="PRU00255"/>
    </source>
</evidence>
<evidence type="ECO:0000305" key="6"/>
<feature type="chain" id="PRO_0000154823" description="Integral membrane protein 2B">
    <location>
        <begin position="1"/>
        <end position="266"/>
    </location>
</feature>
<feature type="chain" id="PRO_0000417483" description="BRI2, membrane form" evidence="1">
    <location>
        <begin position="1"/>
        <end position="243"/>
    </location>
</feature>
<feature type="chain" id="PRO_0000417484" description="BRI2 intracellular domain" evidence="1">
    <location>
        <begin position="1"/>
        <end status="unknown"/>
    </location>
</feature>
<feature type="chain" id="PRO_0000417485" description="BRI2C, soluble form" evidence="1">
    <location>
        <begin status="unknown"/>
        <end position="243"/>
    </location>
</feature>
<feature type="peptide" id="PRO_0000417486" description="Bri23 peptide" evidence="1">
    <location>
        <begin position="244"/>
        <end position="266"/>
    </location>
</feature>
<feature type="topological domain" description="Cytoplasmic" evidence="4">
    <location>
        <begin position="1"/>
        <end position="54"/>
    </location>
</feature>
<feature type="transmembrane region" description="Helical; Signal-anchor for type II membrane protein" evidence="4">
    <location>
        <begin position="55"/>
        <end position="75"/>
    </location>
</feature>
<feature type="topological domain" description="Lumenal" evidence="4">
    <location>
        <begin position="76"/>
        <end position="266"/>
    </location>
</feature>
<feature type="domain" description="BRICHOS" evidence="5">
    <location>
        <begin position="137"/>
        <end position="231"/>
    </location>
</feature>
<feature type="region of interest" description="Necessary for interaction with APP and inhibitor effects on APP processing" evidence="1">
    <location>
        <begin position="102"/>
        <end position="134"/>
    </location>
</feature>
<feature type="site" description="Cleavage; by furin" evidence="1">
    <location>
        <begin position="243"/>
        <end position="244"/>
    </location>
</feature>
<feature type="glycosylation site" description="N-linked (GlcNAc...) asparagine" evidence="4">
    <location>
        <position position="170"/>
    </location>
</feature>
<feature type="disulfide bond" description="Interchain" evidence="1">
    <location>
        <position position="89"/>
    </location>
</feature>
<feature type="disulfide bond" evidence="1">
    <location>
        <begin position="164"/>
        <end position="223"/>
    </location>
</feature>
<feature type="disulfide bond" evidence="1">
    <location>
        <begin position="248"/>
        <end position="265"/>
    </location>
</feature>
<name>ITM2B_PONAB</name>
<reference key="1">
    <citation type="submission" date="2004-11" db="EMBL/GenBank/DDBJ databases">
        <authorList>
            <consortium name="The German cDNA consortium"/>
        </authorList>
    </citation>
    <scope>NUCLEOTIDE SEQUENCE [LARGE SCALE MRNA]</scope>
    <source>
        <tissue>Kidney</tissue>
    </source>
</reference>
<proteinExistence type="evidence at transcript level"/>
<dbReference type="EMBL" id="CR859878">
    <property type="protein sequence ID" value="CAH92034.1"/>
    <property type="molecule type" value="mRNA"/>
</dbReference>
<dbReference type="RefSeq" id="XP_002824307.1">
    <property type="nucleotide sequence ID" value="XM_002824261.5"/>
</dbReference>
<dbReference type="SMR" id="Q5R876"/>
<dbReference type="FunCoup" id="Q5R876">
    <property type="interactions" value="1320"/>
</dbReference>
<dbReference type="STRING" id="9601.ENSPPYP00000006101"/>
<dbReference type="GlyCosmos" id="Q5R876">
    <property type="glycosylation" value="1 site, No reported glycans"/>
</dbReference>
<dbReference type="Ensembl" id="ENSPPYT00000006340.2">
    <property type="protein sequence ID" value="ENSPPYP00000006101.1"/>
    <property type="gene ID" value="ENSPPYG00000005356.2"/>
</dbReference>
<dbReference type="GeneID" id="100459693"/>
<dbReference type="KEGG" id="pon:100459693"/>
<dbReference type="CTD" id="9445"/>
<dbReference type="eggNOG" id="KOG4681">
    <property type="taxonomic scope" value="Eukaryota"/>
</dbReference>
<dbReference type="GeneTree" id="ENSGT00950000183115"/>
<dbReference type="HOGENOM" id="CLU_074596_0_0_1"/>
<dbReference type="InParanoid" id="Q5R876"/>
<dbReference type="OMA" id="YFAFQQD"/>
<dbReference type="OrthoDB" id="9982095at2759"/>
<dbReference type="TreeFam" id="TF317770"/>
<dbReference type="Proteomes" id="UP000001595">
    <property type="component" value="Chromosome 13"/>
</dbReference>
<dbReference type="GO" id="GO:0010008">
    <property type="term" value="C:endosome membrane"/>
    <property type="evidence" value="ECO:0007669"/>
    <property type="project" value="UniProtKB-SubCell"/>
</dbReference>
<dbReference type="GO" id="GO:0070062">
    <property type="term" value="C:extracellular exosome"/>
    <property type="evidence" value="ECO:0007669"/>
    <property type="project" value="TreeGrafter"/>
</dbReference>
<dbReference type="GO" id="GO:0005615">
    <property type="term" value="C:extracellular space"/>
    <property type="evidence" value="ECO:0000250"/>
    <property type="project" value="UniProtKB"/>
</dbReference>
<dbReference type="GO" id="GO:0000139">
    <property type="term" value="C:Golgi membrane"/>
    <property type="evidence" value="ECO:0007669"/>
    <property type="project" value="UniProtKB-SubCell"/>
</dbReference>
<dbReference type="GO" id="GO:0030660">
    <property type="term" value="C:Golgi-associated vesicle membrane"/>
    <property type="evidence" value="ECO:0000250"/>
    <property type="project" value="UniProtKB"/>
</dbReference>
<dbReference type="GO" id="GO:0031090">
    <property type="term" value="C:organelle membrane"/>
    <property type="evidence" value="ECO:0000250"/>
    <property type="project" value="UniProtKB"/>
</dbReference>
<dbReference type="GO" id="GO:0005886">
    <property type="term" value="C:plasma membrane"/>
    <property type="evidence" value="ECO:0000250"/>
    <property type="project" value="UniProtKB"/>
</dbReference>
<dbReference type="GO" id="GO:0001540">
    <property type="term" value="F:amyloid-beta binding"/>
    <property type="evidence" value="ECO:0007669"/>
    <property type="project" value="Ensembl"/>
</dbReference>
<dbReference type="GO" id="GO:0005524">
    <property type="term" value="F:ATP binding"/>
    <property type="evidence" value="ECO:0007669"/>
    <property type="project" value="Ensembl"/>
</dbReference>
<dbReference type="GO" id="GO:0042985">
    <property type="term" value="P:negative regulation of amyloid precursor protein biosynthetic process"/>
    <property type="evidence" value="ECO:0000250"/>
    <property type="project" value="UniProtKB"/>
</dbReference>
<dbReference type="InterPro" id="IPR007084">
    <property type="entry name" value="BRICHOS_dom"/>
</dbReference>
<dbReference type="InterPro" id="IPR040145">
    <property type="entry name" value="ITM2"/>
</dbReference>
<dbReference type="PANTHER" id="PTHR10962:SF4">
    <property type="entry name" value="INTEGRAL MEMBRANE PROTEIN 2B"/>
    <property type="match status" value="1"/>
</dbReference>
<dbReference type="PANTHER" id="PTHR10962">
    <property type="entry name" value="INTEGRAL TRANSMEMBRANE PROTEIN 2"/>
    <property type="match status" value="1"/>
</dbReference>
<dbReference type="Pfam" id="PF04089">
    <property type="entry name" value="BRICHOS"/>
    <property type="match status" value="1"/>
</dbReference>
<dbReference type="SMART" id="SM01039">
    <property type="entry name" value="BRICHOS"/>
    <property type="match status" value="1"/>
</dbReference>
<dbReference type="PROSITE" id="PS50869">
    <property type="entry name" value="BRICHOS"/>
    <property type="match status" value="1"/>
</dbReference>
<organism>
    <name type="scientific">Pongo abelii</name>
    <name type="common">Sumatran orangutan</name>
    <name type="synonym">Pongo pygmaeus abelii</name>
    <dbReference type="NCBI Taxonomy" id="9601"/>
    <lineage>
        <taxon>Eukaryota</taxon>
        <taxon>Metazoa</taxon>
        <taxon>Chordata</taxon>
        <taxon>Craniata</taxon>
        <taxon>Vertebrata</taxon>
        <taxon>Euteleostomi</taxon>
        <taxon>Mammalia</taxon>
        <taxon>Eutheria</taxon>
        <taxon>Euarchontoglires</taxon>
        <taxon>Primates</taxon>
        <taxon>Haplorrhini</taxon>
        <taxon>Catarrhini</taxon>
        <taxon>Hominidae</taxon>
        <taxon>Pongo</taxon>
    </lineage>
</organism>